<feature type="chain" id="PRO_1000130273" description="Ribosomal RNA small subunit methyltransferase A">
    <location>
        <begin position="1"/>
        <end position="273"/>
    </location>
</feature>
<feature type="binding site" evidence="1">
    <location>
        <position position="18"/>
    </location>
    <ligand>
        <name>S-adenosyl-L-methionine</name>
        <dbReference type="ChEBI" id="CHEBI:59789"/>
    </ligand>
</feature>
<feature type="binding site" evidence="1">
    <location>
        <position position="20"/>
    </location>
    <ligand>
        <name>S-adenosyl-L-methionine</name>
        <dbReference type="ChEBI" id="CHEBI:59789"/>
    </ligand>
</feature>
<feature type="binding site" evidence="1">
    <location>
        <position position="45"/>
    </location>
    <ligand>
        <name>S-adenosyl-L-methionine</name>
        <dbReference type="ChEBI" id="CHEBI:59789"/>
    </ligand>
</feature>
<feature type="binding site" evidence="1">
    <location>
        <position position="66"/>
    </location>
    <ligand>
        <name>S-adenosyl-L-methionine</name>
        <dbReference type="ChEBI" id="CHEBI:59789"/>
    </ligand>
</feature>
<feature type="binding site" evidence="1">
    <location>
        <position position="91"/>
    </location>
    <ligand>
        <name>S-adenosyl-L-methionine</name>
        <dbReference type="ChEBI" id="CHEBI:59789"/>
    </ligand>
</feature>
<feature type="binding site" evidence="1">
    <location>
        <position position="113"/>
    </location>
    <ligand>
        <name>S-adenosyl-L-methionine</name>
        <dbReference type="ChEBI" id="CHEBI:59789"/>
    </ligand>
</feature>
<keyword id="KW-0963">Cytoplasm</keyword>
<keyword id="KW-0489">Methyltransferase</keyword>
<keyword id="KW-0694">RNA-binding</keyword>
<keyword id="KW-0698">rRNA processing</keyword>
<keyword id="KW-0949">S-adenosyl-L-methionine</keyword>
<keyword id="KW-0808">Transferase</keyword>
<reference key="1">
    <citation type="journal article" date="2008" name="J. Bacteriol.">
        <title>The complete genome sequence of Escherichia coli DH10B: insights into the biology of a laboratory workhorse.</title>
        <authorList>
            <person name="Durfee T."/>
            <person name="Nelson R."/>
            <person name="Baldwin S."/>
            <person name="Plunkett G. III"/>
            <person name="Burland V."/>
            <person name="Mau B."/>
            <person name="Petrosino J.F."/>
            <person name="Qin X."/>
            <person name="Muzny D.M."/>
            <person name="Ayele M."/>
            <person name="Gibbs R.A."/>
            <person name="Csorgo B."/>
            <person name="Posfai G."/>
            <person name="Weinstock G.M."/>
            <person name="Blattner F.R."/>
        </authorList>
    </citation>
    <scope>NUCLEOTIDE SEQUENCE [LARGE SCALE GENOMIC DNA]</scope>
    <source>
        <strain>K12 / DH10B</strain>
    </source>
</reference>
<gene>
    <name evidence="1" type="primary">rsmA</name>
    <name evidence="1" type="synonym">ksgA</name>
    <name type="ordered locus">ECDH10B_0052</name>
</gene>
<evidence type="ECO:0000255" key="1">
    <source>
        <dbReference type="HAMAP-Rule" id="MF_00607"/>
    </source>
</evidence>
<sequence length="273" mass="30420">MNNRVHQGHLARKRFGQNFLNDQFVIDSIVSAINPQKGQAMVEIGPGLAALTEPVGERLDQLTVIELDRDLAARLQTHPFLGPKLTIYQQDAMTFNFGELAEKMGQPLRVFGNLPYNISTPLMFHLFSYTDAIADMHFMLQKEVVNRLVAGPNSKAYGRLSVMAQYYCNVIPVLEVPPSAFTPPPKVDSAVVRLVPHATMPHPVKDVRVLSRITTEAFNQRRKTIRNSLGNLFSVEVLTGMGIDPAMRAENISVAQYCQMANYLAENAPLQES</sequence>
<proteinExistence type="inferred from homology"/>
<name>RSMA_ECODH</name>
<protein>
    <recommendedName>
        <fullName evidence="1">Ribosomal RNA small subunit methyltransferase A</fullName>
        <ecNumber evidence="1">2.1.1.182</ecNumber>
    </recommendedName>
    <alternativeName>
        <fullName evidence="1">16S rRNA (adenine(1518)-N(6)/adenine(1519)-N(6))-dimethyltransferase</fullName>
    </alternativeName>
    <alternativeName>
        <fullName evidence="1">16S rRNA dimethyladenosine transferase</fullName>
    </alternativeName>
    <alternativeName>
        <fullName evidence="1">16S rRNA dimethylase</fullName>
    </alternativeName>
    <alternativeName>
        <fullName evidence="1">S-adenosylmethionine-6-N', N'-adenosyl(rRNA) dimethyltransferase</fullName>
    </alternativeName>
</protein>
<comment type="function">
    <text evidence="1">Specifically dimethylates two adjacent adenosines (A1518 and A1519) in the loop of a conserved hairpin near the 3'-end of 16S rRNA in the 30S particle. May play a critical role in biogenesis of 30S subunits.</text>
</comment>
<comment type="catalytic activity">
    <reaction evidence="1">
        <text>adenosine(1518)/adenosine(1519) in 16S rRNA + 4 S-adenosyl-L-methionine = N(6)-dimethyladenosine(1518)/N(6)-dimethyladenosine(1519) in 16S rRNA + 4 S-adenosyl-L-homocysteine + 4 H(+)</text>
        <dbReference type="Rhea" id="RHEA:19609"/>
        <dbReference type="Rhea" id="RHEA-COMP:10232"/>
        <dbReference type="Rhea" id="RHEA-COMP:10233"/>
        <dbReference type="ChEBI" id="CHEBI:15378"/>
        <dbReference type="ChEBI" id="CHEBI:57856"/>
        <dbReference type="ChEBI" id="CHEBI:59789"/>
        <dbReference type="ChEBI" id="CHEBI:74411"/>
        <dbReference type="ChEBI" id="CHEBI:74493"/>
        <dbReference type="EC" id="2.1.1.182"/>
    </reaction>
</comment>
<comment type="subcellular location">
    <subcellularLocation>
        <location evidence="1">Cytoplasm</location>
    </subcellularLocation>
</comment>
<comment type="similarity">
    <text evidence="1">Belongs to the class I-like SAM-binding methyltransferase superfamily. rRNA adenine N(6)-methyltransferase family. RsmA subfamily.</text>
</comment>
<organism>
    <name type="scientific">Escherichia coli (strain K12 / DH10B)</name>
    <dbReference type="NCBI Taxonomy" id="316385"/>
    <lineage>
        <taxon>Bacteria</taxon>
        <taxon>Pseudomonadati</taxon>
        <taxon>Pseudomonadota</taxon>
        <taxon>Gammaproteobacteria</taxon>
        <taxon>Enterobacterales</taxon>
        <taxon>Enterobacteriaceae</taxon>
        <taxon>Escherichia</taxon>
    </lineage>
</organism>
<dbReference type="EC" id="2.1.1.182" evidence="1"/>
<dbReference type="EMBL" id="CP000948">
    <property type="protein sequence ID" value="ACB01256.1"/>
    <property type="molecule type" value="Genomic_DNA"/>
</dbReference>
<dbReference type="RefSeq" id="WP_001065381.1">
    <property type="nucleotide sequence ID" value="NC_010473.1"/>
</dbReference>
<dbReference type="SMR" id="B1XC52"/>
<dbReference type="GeneID" id="93777384"/>
<dbReference type="KEGG" id="ecd:ECDH10B_0052"/>
<dbReference type="HOGENOM" id="CLU_041220_0_1_6"/>
<dbReference type="GO" id="GO:0005829">
    <property type="term" value="C:cytosol"/>
    <property type="evidence" value="ECO:0007669"/>
    <property type="project" value="TreeGrafter"/>
</dbReference>
<dbReference type="GO" id="GO:0052908">
    <property type="term" value="F:16S rRNA (adenine(1518)-N(6)/adenine(1519)-N(6))-dimethyltransferase activity"/>
    <property type="evidence" value="ECO:0007669"/>
    <property type="project" value="UniProtKB-EC"/>
</dbReference>
<dbReference type="GO" id="GO:0003723">
    <property type="term" value="F:RNA binding"/>
    <property type="evidence" value="ECO:0007669"/>
    <property type="project" value="UniProtKB-KW"/>
</dbReference>
<dbReference type="FunFam" id="1.10.8.100:FF:000001">
    <property type="entry name" value="Ribosomal RNA small subunit methyltransferase A"/>
    <property type="match status" value="1"/>
</dbReference>
<dbReference type="FunFam" id="3.40.50.150:FF:000006">
    <property type="entry name" value="Ribosomal RNA small subunit methyltransferase A"/>
    <property type="match status" value="1"/>
</dbReference>
<dbReference type="Gene3D" id="1.10.8.100">
    <property type="entry name" value="Ribosomal RNA adenine dimethylase-like, domain 2"/>
    <property type="match status" value="1"/>
</dbReference>
<dbReference type="Gene3D" id="3.40.50.150">
    <property type="entry name" value="Vaccinia Virus protein VP39"/>
    <property type="match status" value="1"/>
</dbReference>
<dbReference type="HAMAP" id="MF_00607">
    <property type="entry name" value="16SrRNA_methyltr_A"/>
    <property type="match status" value="1"/>
</dbReference>
<dbReference type="InterPro" id="IPR001737">
    <property type="entry name" value="KsgA/Erm"/>
</dbReference>
<dbReference type="InterPro" id="IPR023165">
    <property type="entry name" value="rRNA_Ade_diMease-like_C"/>
</dbReference>
<dbReference type="InterPro" id="IPR020596">
    <property type="entry name" value="rRNA_Ade_Mease_Trfase_CS"/>
</dbReference>
<dbReference type="InterPro" id="IPR020598">
    <property type="entry name" value="rRNA_Ade_methylase_Trfase_N"/>
</dbReference>
<dbReference type="InterPro" id="IPR011530">
    <property type="entry name" value="rRNA_adenine_dimethylase"/>
</dbReference>
<dbReference type="InterPro" id="IPR029063">
    <property type="entry name" value="SAM-dependent_MTases_sf"/>
</dbReference>
<dbReference type="NCBIfam" id="TIGR00755">
    <property type="entry name" value="ksgA"/>
    <property type="match status" value="1"/>
</dbReference>
<dbReference type="PANTHER" id="PTHR11727">
    <property type="entry name" value="DIMETHYLADENOSINE TRANSFERASE"/>
    <property type="match status" value="1"/>
</dbReference>
<dbReference type="PANTHER" id="PTHR11727:SF7">
    <property type="entry name" value="DIMETHYLADENOSINE TRANSFERASE-RELATED"/>
    <property type="match status" value="1"/>
</dbReference>
<dbReference type="Pfam" id="PF00398">
    <property type="entry name" value="RrnaAD"/>
    <property type="match status" value="1"/>
</dbReference>
<dbReference type="SMART" id="SM00650">
    <property type="entry name" value="rADc"/>
    <property type="match status" value="1"/>
</dbReference>
<dbReference type="SUPFAM" id="SSF53335">
    <property type="entry name" value="S-adenosyl-L-methionine-dependent methyltransferases"/>
    <property type="match status" value="1"/>
</dbReference>
<dbReference type="PROSITE" id="PS01131">
    <property type="entry name" value="RRNA_A_DIMETH"/>
    <property type="match status" value="1"/>
</dbReference>
<dbReference type="PROSITE" id="PS51689">
    <property type="entry name" value="SAM_RNA_A_N6_MT"/>
    <property type="match status" value="1"/>
</dbReference>
<accession>B1XC52</accession>